<accession>Q3BXK9</accession>
<reference key="1">
    <citation type="journal article" date="2005" name="J. Bacteriol.">
        <title>Insights into genome plasticity and pathogenicity of the plant pathogenic Bacterium Xanthomonas campestris pv. vesicatoria revealed by the complete genome sequence.</title>
        <authorList>
            <person name="Thieme F."/>
            <person name="Koebnik R."/>
            <person name="Bekel T."/>
            <person name="Berger C."/>
            <person name="Boch J."/>
            <person name="Buettner D."/>
            <person name="Caldana C."/>
            <person name="Gaigalat L."/>
            <person name="Goesmann A."/>
            <person name="Kay S."/>
            <person name="Kirchner O."/>
            <person name="Lanz C."/>
            <person name="Linke B."/>
            <person name="McHardy A.C."/>
            <person name="Meyer F."/>
            <person name="Mittenhuber G."/>
            <person name="Nies D.H."/>
            <person name="Niesbach-Kloesgen U."/>
            <person name="Patschkowski T."/>
            <person name="Rueckert C."/>
            <person name="Rupp O."/>
            <person name="Schneiker S."/>
            <person name="Schuster S.C."/>
            <person name="Vorhoelter F.J."/>
            <person name="Weber E."/>
            <person name="Puehler A."/>
            <person name="Bonas U."/>
            <person name="Bartels D."/>
            <person name="Kaiser O."/>
        </authorList>
    </citation>
    <scope>NUCLEOTIDE SEQUENCE [LARGE SCALE GENOMIC DNA]</scope>
    <source>
        <strain>85-10</strain>
    </source>
</reference>
<evidence type="ECO:0000255" key="1">
    <source>
        <dbReference type="HAMAP-Rule" id="MF_01261"/>
    </source>
</evidence>
<feature type="chain" id="PRO_1000054307" description="Multifunctional CCA protein">
    <location>
        <begin position="1"/>
        <end position="410"/>
    </location>
</feature>
<feature type="domain" description="HD" evidence="1">
    <location>
        <begin position="229"/>
        <end position="347"/>
    </location>
</feature>
<feature type="binding site" evidence="1">
    <location>
        <position position="8"/>
    </location>
    <ligand>
        <name>ATP</name>
        <dbReference type="ChEBI" id="CHEBI:30616"/>
    </ligand>
</feature>
<feature type="binding site" evidence="1">
    <location>
        <position position="8"/>
    </location>
    <ligand>
        <name>CTP</name>
        <dbReference type="ChEBI" id="CHEBI:37563"/>
    </ligand>
</feature>
<feature type="binding site" evidence="1">
    <location>
        <position position="11"/>
    </location>
    <ligand>
        <name>ATP</name>
        <dbReference type="ChEBI" id="CHEBI:30616"/>
    </ligand>
</feature>
<feature type="binding site" evidence="1">
    <location>
        <position position="11"/>
    </location>
    <ligand>
        <name>CTP</name>
        <dbReference type="ChEBI" id="CHEBI:37563"/>
    </ligand>
</feature>
<feature type="binding site" evidence="1">
    <location>
        <position position="21"/>
    </location>
    <ligand>
        <name>Mg(2+)</name>
        <dbReference type="ChEBI" id="CHEBI:18420"/>
    </ligand>
</feature>
<feature type="binding site" evidence="1">
    <location>
        <position position="23"/>
    </location>
    <ligand>
        <name>Mg(2+)</name>
        <dbReference type="ChEBI" id="CHEBI:18420"/>
    </ligand>
</feature>
<feature type="binding site" evidence="1">
    <location>
        <position position="91"/>
    </location>
    <ligand>
        <name>ATP</name>
        <dbReference type="ChEBI" id="CHEBI:30616"/>
    </ligand>
</feature>
<feature type="binding site" evidence="1">
    <location>
        <position position="91"/>
    </location>
    <ligand>
        <name>CTP</name>
        <dbReference type="ChEBI" id="CHEBI:37563"/>
    </ligand>
</feature>
<feature type="binding site" evidence="1">
    <location>
        <position position="138"/>
    </location>
    <ligand>
        <name>ATP</name>
        <dbReference type="ChEBI" id="CHEBI:30616"/>
    </ligand>
</feature>
<feature type="binding site" evidence="1">
    <location>
        <position position="138"/>
    </location>
    <ligand>
        <name>CTP</name>
        <dbReference type="ChEBI" id="CHEBI:37563"/>
    </ligand>
</feature>
<feature type="binding site" evidence="1">
    <location>
        <position position="141"/>
    </location>
    <ligand>
        <name>ATP</name>
        <dbReference type="ChEBI" id="CHEBI:30616"/>
    </ligand>
</feature>
<feature type="binding site" evidence="1">
    <location>
        <position position="141"/>
    </location>
    <ligand>
        <name>CTP</name>
        <dbReference type="ChEBI" id="CHEBI:37563"/>
    </ligand>
</feature>
<comment type="function">
    <text evidence="1">Catalyzes the addition and repair of the essential 3'-terminal CCA sequence in tRNAs without using a nucleic acid template. Adds these three nucleotides in the order of C, C, and A to the tRNA nucleotide-73, using CTP and ATP as substrates and producing inorganic pyrophosphate. tRNA 3'-terminal CCA addition is required both for tRNA processing and repair. Also involved in tRNA surveillance by mediating tandem CCA addition to generate a CCACCA at the 3' terminus of unstable tRNAs. While stable tRNAs receive only 3'-terminal CCA, unstable tRNAs are marked with CCACCA and rapidly degraded.</text>
</comment>
<comment type="catalytic activity">
    <reaction evidence="1">
        <text>a tRNA precursor + 2 CTP + ATP = a tRNA with a 3' CCA end + 3 diphosphate</text>
        <dbReference type="Rhea" id="RHEA:14433"/>
        <dbReference type="Rhea" id="RHEA-COMP:10465"/>
        <dbReference type="Rhea" id="RHEA-COMP:10468"/>
        <dbReference type="ChEBI" id="CHEBI:30616"/>
        <dbReference type="ChEBI" id="CHEBI:33019"/>
        <dbReference type="ChEBI" id="CHEBI:37563"/>
        <dbReference type="ChEBI" id="CHEBI:74896"/>
        <dbReference type="ChEBI" id="CHEBI:83071"/>
        <dbReference type="EC" id="2.7.7.72"/>
    </reaction>
</comment>
<comment type="catalytic activity">
    <reaction evidence="1">
        <text>a tRNA with a 3' CCA end + 2 CTP + ATP = a tRNA with a 3' CCACCA end + 3 diphosphate</text>
        <dbReference type="Rhea" id="RHEA:76235"/>
        <dbReference type="Rhea" id="RHEA-COMP:10468"/>
        <dbReference type="Rhea" id="RHEA-COMP:18655"/>
        <dbReference type="ChEBI" id="CHEBI:30616"/>
        <dbReference type="ChEBI" id="CHEBI:33019"/>
        <dbReference type="ChEBI" id="CHEBI:37563"/>
        <dbReference type="ChEBI" id="CHEBI:83071"/>
        <dbReference type="ChEBI" id="CHEBI:195187"/>
    </reaction>
    <physiologicalReaction direction="left-to-right" evidence="1">
        <dbReference type="Rhea" id="RHEA:76236"/>
    </physiologicalReaction>
</comment>
<comment type="cofactor">
    <cofactor evidence="1">
        <name>Mg(2+)</name>
        <dbReference type="ChEBI" id="CHEBI:18420"/>
    </cofactor>
    <text evidence="1">Magnesium is required for nucleotidyltransferase activity.</text>
</comment>
<comment type="cofactor">
    <cofactor evidence="1">
        <name>Ni(2+)</name>
        <dbReference type="ChEBI" id="CHEBI:49786"/>
    </cofactor>
    <text evidence="1">Nickel for phosphatase activity.</text>
</comment>
<comment type="subunit">
    <text evidence="1">Monomer. Can also form homodimers and oligomers.</text>
</comment>
<comment type="domain">
    <text evidence="1">Comprises two domains: an N-terminal domain containing the nucleotidyltransferase activity and a C-terminal HD domain associated with both phosphodiesterase and phosphatase activities.</text>
</comment>
<comment type="miscellaneous">
    <text evidence="1">A single active site specifically recognizes both ATP and CTP and is responsible for their addition.</text>
</comment>
<comment type="similarity">
    <text evidence="1">Belongs to the tRNA nucleotidyltransferase/poly(A) polymerase family. Bacterial CCA-adding enzyme type 1 subfamily.</text>
</comment>
<organism>
    <name type="scientific">Xanthomonas euvesicatoria pv. vesicatoria (strain 85-10)</name>
    <name type="common">Xanthomonas campestris pv. vesicatoria</name>
    <dbReference type="NCBI Taxonomy" id="316273"/>
    <lineage>
        <taxon>Bacteria</taxon>
        <taxon>Pseudomonadati</taxon>
        <taxon>Pseudomonadota</taxon>
        <taxon>Gammaproteobacteria</taxon>
        <taxon>Lysobacterales</taxon>
        <taxon>Lysobacteraceae</taxon>
        <taxon>Xanthomonas</taxon>
    </lineage>
</organism>
<proteinExistence type="inferred from homology"/>
<dbReference type="EC" id="2.7.7.72" evidence="1"/>
<dbReference type="EC" id="3.1.3.-" evidence="1"/>
<dbReference type="EC" id="3.1.4.-" evidence="1"/>
<dbReference type="EMBL" id="AM039952">
    <property type="protein sequence ID" value="CAJ22404.1"/>
    <property type="molecule type" value="Genomic_DNA"/>
</dbReference>
<dbReference type="RefSeq" id="WP_011346381.1">
    <property type="nucleotide sequence ID" value="NZ_CP017190.1"/>
</dbReference>
<dbReference type="SMR" id="Q3BXK9"/>
<dbReference type="STRING" id="456327.BJD11_18950"/>
<dbReference type="KEGG" id="xcv:XCV0773"/>
<dbReference type="eggNOG" id="COG0617">
    <property type="taxonomic scope" value="Bacteria"/>
</dbReference>
<dbReference type="HOGENOM" id="CLU_015961_1_1_6"/>
<dbReference type="Proteomes" id="UP000007069">
    <property type="component" value="Chromosome"/>
</dbReference>
<dbReference type="GO" id="GO:0005524">
    <property type="term" value="F:ATP binding"/>
    <property type="evidence" value="ECO:0007669"/>
    <property type="project" value="UniProtKB-UniRule"/>
</dbReference>
<dbReference type="GO" id="GO:0004810">
    <property type="term" value="F:CCA tRNA nucleotidyltransferase activity"/>
    <property type="evidence" value="ECO:0007669"/>
    <property type="project" value="UniProtKB-UniRule"/>
</dbReference>
<dbReference type="GO" id="GO:0004112">
    <property type="term" value="F:cyclic-nucleotide phosphodiesterase activity"/>
    <property type="evidence" value="ECO:0007669"/>
    <property type="project" value="UniProtKB-UniRule"/>
</dbReference>
<dbReference type="GO" id="GO:0000287">
    <property type="term" value="F:magnesium ion binding"/>
    <property type="evidence" value="ECO:0007669"/>
    <property type="project" value="UniProtKB-UniRule"/>
</dbReference>
<dbReference type="GO" id="GO:0016791">
    <property type="term" value="F:phosphatase activity"/>
    <property type="evidence" value="ECO:0007669"/>
    <property type="project" value="UniProtKB-UniRule"/>
</dbReference>
<dbReference type="GO" id="GO:0000049">
    <property type="term" value="F:tRNA binding"/>
    <property type="evidence" value="ECO:0007669"/>
    <property type="project" value="UniProtKB-UniRule"/>
</dbReference>
<dbReference type="GO" id="GO:0042245">
    <property type="term" value="P:RNA repair"/>
    <property type="evidence" value="ECO:0007669"/>
    <property type="project" value="UniProtKB-KW"/>
</dbReference>
<dbReference type="GO" id="GO:0001680">
    <property type="term" value="P:tRNA 3'-terminal CCA addition"/>
    <property type="evidence" value="ECO:0007669"/>
    <property type="project" value="UniProtKB-UniRule"/>
</dbReference>
<dbReference type="CDD" id="cd05398">
    <property type="entry name" value="NT_ClassII-CCAase"/>
    <property type="match status" value="1"/>
</dbReference>
<dbReference type="Gene3D" id="3.30.460.10">
    <property type="entry name" value="Beta Polymerase, domain 2"/>
    <property type="match status" value="1"/>
</dbReference>
<dbReference type="Gene3D" id="1.10.3090.10">
    <property type="entry name" value="cca-adding enzyme, domain 2"/>
    <property type="match status" value="1"/>
</dbReference>
<dbReference type="HAMAP" id="MF_01261">
    <property type="entry name" value="CCA_bact_type1"/>
    <property type="match status" value="1"/>
</dbReference>
<dbReference type="InterPro" id="IPR012006">
    <property type="entry name" value="CCA_bact"/>
</dbReference>
<dbReference type="InterPro" id="IPR006674">
    <property type="entry name" value="HD_domain"/>
</dbReference>
<dbReference type="InterPro" id="IPR043519">
    <property type="entry name" value="NT_sf"/>
</dbReference>
<dbReference type="InterPro" id="IPR002646">
    <property type="entry name" value="PolA_pol_head_dom"/>
</dbReference>
<dbReference type="InterPro" id="IPR032828">
    <property type="entry name" value="PolyA_RNA-bd"/>
</dbReference>
<dbReference type="InterPro" id="IPR050124">
    <property type="entry name" value="tRNA_CCA-adding_enzyme"/>
</dbReference>
<dbReference type="NCBIfam" id="NF008137">
    <property type="entry name" value="PRK10885.1"/>
    <property type="match status" value="1"/>
</dbReference>
<dbReference type="PANTHER" id="PTHR47545">
    <property type="entry name" value="MULTIFUNCTIONAL CCA PROTEIN"/>
    <property type="match status" value="1"/>
</dbReference>
<dbReference type="PANTHER" id="PTHR47545:SF1">
    <property type="entry name" value="MULTIFUNCTIONAL CCA PROTEIN"/>
    <property type="match status" value="1"/>
</dbReference>
<dbReference type="Pfam" id="PF01966">
    <property type="entry name" value="HD"/>
    <property type="match status" value="1"/>
</dbReference>
<dbReference type="Pfam" id="PF01743">
    <property type="entry name" value="PolyA_pol"/>
    <property type="match status" value="1"/>
</dbReference>
<dbReference type="Pfam" id="PF12627">
    <property type="entry name" value="PolyA_pol_RNAbd"/>
    <property type="match status" value="1"/>
</dbReference>
<dbReference type="PIRSF" id="PIRSF000813">
    <property type="entry name" value="CCA_bact"/>
    <property type="match status" value="1"/>
</dbReference>
<dbReference type="SUPFAM" id="SSF81301">
    <property type="entry name" value="Nucleotidyltransferase"/>
    <property type="match status" value="1"/>
</dbReference>
<dbReference type="SUPFAM" id="SSF81891">
    <property type="entry name" value="Poly A polymerase C-terminal region-like"/>
    <property type="match status" value="1"/>
</dbReference>
<dbReference type="PROSITE" id="PS51831">
    <property type="entry name" value="HD"/>
    <property type="match status" value="1"/>
</dbReference>
<gene>
    <name evidence="1" type="primary">cca</name>
    <name type="ordered locus">XCV0773</name>
</gene>
<protein>
    <recommendedName>
        <fullName evidence="1">Multifunctional CCA protein</fullName>
    </recommendedName>
    <domain>
        <recommendedName>
            <fullName evidence="1">CCA-adding enzyme</fullName>
            <ecNumber evidence="1">2.7.7.72</ecNumber>
        </recommendedName>
        <alternativeName>
            <fullName evidence="1">CCA tRNA nucleotidyltransferase</fullName>
        </alternativeName>
        <alternativeName>
            <fullName evidence="1">tRNA CCA-pyrophosphorylase</fullName>
        </alternativeName>
        <alternativeName>
            <fullName evidence="1">tRNA adenylyl-/cytidylyl-transferase</fullName>
        </alternativeName>
        <alternativeName>
            <fullName evidence="1">tRNA nucleotidyltransferase</fullName>
        </alternativeName>
        <alternativeName>
            <fullName evidence="1">tRNA-NT</fullName>
        </alternativeName>
    </domain>
    <domain>
        <recommendedName>
            <fullName evidence="1">2'-nucleotidase</fullName>
            <ecNumber evidence="1">3.1.3.-</ecNumber>
        </recommendedName>
    </domain>
    <domain>
        <recommendedName>
            <fullName evidence="1">2',3'-cyclic phosphodiesterase</fullName>
            <ecNumber evidence="1">3.1.4.-</ecNumber>
        </recommendedName>
    </domain>
    <domain>
        <recommendedName>
            <fullName evidence="1">Phosphatase</fullName>
            <ecNumber evidence="1">3.1.3.-</ecNumber>
        </recommendedName>
    </domain>
</protein>
<name>CCA_XANE5</name>
<sequence>MKIYLVGGAVRDALLEQPAGDRDWVVVGADQAQMEAQGFKPVGKDFPVFLHPRSGEEYALARTERKSGRGYRGFVVDADPSVTLEEDLLRRDFTINAIARDEETGELFDPYNGARDLQARVLRHVGPAFVEDPVRVLRAARFMARLAPLGFTLAADTAALMREMAASGELDSLVPERVWQELRRALSCAQPSAFLRTLHDADALRVILPEVDALYGVPQRAEFHPEVDTGIHQEMVSDMAARLAPGDALVGFAALTHDLGKALTPPEEWPRHVMHEQRGVAPLQALCERLKVPQDFRQLAIIACREHLNVHRLAELRDRTLHELLVRCDAFRRPERIAQLALVCEADKRGRLGSEEAAYPQGEALKRLHAAALAINARDLAAEGLQGPQIGEALTKARIAAIAAARRIGA</sequence>
<keyword id="KW-0067">ATP-binding</keyword>
<keyword id="KW-0378">Hydrolase</keyword>
<keyword id="KW-0460">Magnesium</keyword>
<keyword id="KW-0479">Metal-binding</keyword>
<keyword id="KW-0511">Multifunctional enzyme</keyword>
<keyword id="KW-0533">Nickel</keyword>
<keyword id="KW-0547">Nucleotide-binding</keyword>
<keyword id="KW-0548">Nucleotidyltransferase</keyword>
<keyword id="KW-0692">RNA repair</keyword>
<keyword id="KW-0694">RNA-binding</keyword>
<keyword id="KW-0808">Transferase</keyword>
<keyword id="KW-0819">tRNA processing</keyword>